<feature type="chain" id="PRO_0000120574" description="Probable molybdopterin-synthase adenylyltransferase">
    <location>
        <begin position="1"/>
        <end position="382"/>
    </location>
</feature>
<feature type="domain" description="Rhodanese" evidence="2">
    <location>
        <begin position="288"/>
        <end position="377"/>
    </location>
</feature>
<feature type="binding site" evidence="1">
    <location>
        <position position="48"/>
    </location>
    <ligand>
        <name>ATP</name>
        <dbReference type="ChEBI" id="CHEBI:30616"/>
    </ligand>
</feature>
<feature type="binding site" evidence="1">
    <location>
        <position position="69"/>
    </location>
    <ligand>
        <name>ATP</name>
        <dbReference type="ChEBI" id="CHEBI:30616"/>
    </ligand>
</feature>
<feature type="binding site" evidence="1">
    <location>
        <begin position="76"/>
        <end position="80"/>
    </location>
    <ligand>
        <name>ATP</name>
        <dbReference type="ChEBI" id="CHEBI:30616"/>
    </ligand>
</feature>
<feature type="binding site" evidence="1">
    <location>
        <position position="93"/>
    </location>
    <ligand>
        <name>ATP</name>
        <dbReference type="ChEBI" id="CHEBI:30616"/>
    </ligand>
</feature>
<feature type="binding site" evidence="1">
    <location>
        <begin position="137"/>
        <end position="138"/>
    </location>
    <ligand>
        <name>ATP</name>
        <dbReference type="ChEBI" id="CHEBI:30616"/>
    </ligand>
</feature>
<reference key="1">
    <citation type="journal article" date="1995" name="Plant Mol. Biol. Rep.">
        <title>Complete nucleotide sequence of the Porphyra purpurea chloroplast genome.</title>
        <authorList>
            <person name="Reith M.E."/>
            <person name="Munholland J."/>
        </authorList>
    </citation>
    <scope>NUCLEOTIDE SEQUENCE [LARGE SCALE GENOMIC DNA]</scope>
    <source>
        <strain>Avonport</strain>
    </source>
</reference>
<keyword id="KW-0067">ATP-binding</keyword>
<keyword id="KW-0150">Chloroplast</keyword>
<keyword id="KW-0501">Molybdenum cofactor biosynthesis</keyword>
<keyword id="KW-0547">Nucleotide-binding</keyword>
<keyword id="KW-0548">Nucleotidyltransferase</keyword>
<keyword id="KW-0934">Plastid</keyword>
<keyword id="KW-0808">Transferase</keyword>
<name>MOEB_PORPU</name>
<proteinExistence type="inferred from homology"/>
<accession>P51335</accession>
<comment type="function">
    <text evidence="1">Catalyzes the adenylation by ATP of the carboxyl group of the C-terminal glycine of sulfur carrier protein moaD.</text>
</comment>
<comment type="catalytic activity">
    <reaction>
        <text>[molybdopterin-synthase sulfur-carrier protein]-C-terminal Gly-Gly + ATP + H(+) = [molybdopterin-synthase sulfur-carrier protein]-C-terminal Gly-Gly-AMP + diphosphate</text>
        <dbReference type="Rhea" id="RHEA:43616"/>
        <dbReference type="Rhea" id="RHEA-COMP:12159"/>
        <dbReference type="Rhea" id="RHEA-COMP:12202"/>
        <dbReference type="ChEBI" id="CHEBI:15378"/>
        <dbReference type="ChEBI" id="CHEBI:30616"/>
        <dbReference type="ChEBI" id="CHEBI:33019"/>
        <dbReference type="ChEBI" id="CHEBI:90618"/>
        <dbReference type="ChEBI" id="CHEBI:90778"/>
        <dbReference type="EC" id="2.7.7.80"/>
    </reaction>
</comment>
<comment type="pathway">
    <text>Cofactor biosynthesis; molybdopterin biosynthesis.</text>
</comment>
<comment type="subcellular location">
    <subcellularLocation>
        <location>Plastid</location>
        <location>Chloroplast</location>
    </subcellularLocation>
</comment>
<comment type="similarity">
    <text evidence="3">Belongs to the HesA/MoeB/ThiF family.</text>
</comment>
<dbReference type="EC" id="2.7.7.80"/>
<dbReference type="EMBL" id="U38804">
    <property type="protein sequence ID" value="AAC08221.1"/>
    <property type="molecule type" value="Genomic_DNA"/>
</dbReference>
<dbReference type="PIR" id="S73256">
    <property type="entry name" value="S73256"/>
</dbReference>
<dbReference type="SMR" id="P51335"/>
<dbReference type="UniPathway" id="UPA00344"/>
<dbReference type="GO" id="GO:0009507">
    <property type="term" value="C:chloroplast"/>
    <property type="evidence" value="ECO:0007669"/>
    <property type="project" value="UniProtKB-SubCell"/>
</dbReference>
<dbReference type="GO" id="GO:0005829">
    <property type="term" value="C:cytosol"/>
    <property type="evidence" value="ECO:0007669"/>
    <property type="project" value="TreeGrafter"/>
</dbReference>
<dbReference type="GO" id="GO:0005524">
    <property type="term" value="F:ATP binding"/>
    <property type="evidence" value="ECO:0007669"/>
    <property type="project" value="UniProtKB-KW"/>
</dbReference>
<dbReference type="GO" id="GO:0061605">
    <property type="term" value="F:molybdopterin-synthase adenylyltransferase activity"/>
    <property type="evidence" value="ECO:0007669"/>
    <property type="project" value="UniProtKB-EC"/>
</dbReference>
<dbReference type="GO" id="GO:0008146">
    <property type="term" value="F:sulfotransferase activity"/>
    <property type="evidence" value="ECO:0007669"/>
    <property type="project" value="TreeGrafter"/>
</dbReference>
<dbReference type="GO" id="GO:0004792">
    <property type="term" value="F:thiosulfate-cyanide sulfurtransferase activity"/>
    <property type="evidence" value="ECO:0007669"/>
    <property type="project" value="TreeGrafter"/>
</dbReference>
<dbReference type="GO" id="GO:0008641">
    <property type="term" value="F:ubiquitin-like modifier activating enzyme activity"/>
    <property type="evidence" value="ECO:0007669"/>
    <property type="project" value="InterPro"/>
</dbReference>
<dbReference type="GO" id="GO:0006777">
    <property type="term" value="P:Mo-molybdopterin cofactor biosynthetic process"/>
    <property type="evidence" value="ECO:0007669"/>
    <property type="project" value="UniProtKB-KW"/>
</dbReference>
<dbReference type="CDD" id="cd00158">
    <property type="entry name" value="RHOD"/>
    <property type="match status" value="1"/>
</dbReference>
<dbReference type="CDD" id="cd00757">
    <property type="entry name" value="ThiF_MoeB_HesA_family"/>
    <property type="match status" value="1"/>
</dbReference>
<dbReference type="FunFam" id="3.40.50.720:FF:000033">
    <property type="entry name" value="Adenylyltransferase and sulfurtransferase MOCS3"/>
    <property type="match status" value="1"/>
</dbReference>
<dbReference type="Gene3D" id="3.40.50.720">
    <property type="entry name" value="NAD(P)-binding Rossmann-like Domain"/>
    <property type="match status" value="1"/>
</dbReference>
<dbReference type="Gene3D" id="3.40.250.10">
    <property type="entry name" value="Rhodanese-like domain"/>
    <property type="match status" value="1"/>
</dbReference>
<dbReference type="InterPro" id="IPR001763">
    <property type="entry name" value="Rhodanese-like_dom"/>
</dbReference>
<dbReference type="InterPro" id="IPR036873">
    <property type="entry name" value="Rhodanese-like_dom_sf"/>
</dbReference>
<dbReference type="InterPro" id="IPR045886">
    <property type="entry name" value="ThiF/MoeB/HesA"/>
</dbReference>
<dbReference type="InterPro" id="IPR000594">
    <property type="entry name" value="ThiF_NAD_FAD-bd"/>
</dbReference>
<dbReference type="InterPro" id="IPR035985">
    <property type="entry name" value="Ubiquitin-activating_enz"/>
</dbReference>
<dbReference type="PANTHER" id="PTHR10953:SF102">
    <property type="entry name" value="ADENYLYLTRANSFERASE AND SULFURTRANSFERASE MOCS3"/>
    <property type="match status" value="1"/>
</dbReference>
<dbReference type="PANTHER" id="PTHR10953">
    <property type="entry name" value="UBIQUITIN-ACTIVATING ENZYME E1"/>
    <property type="match status" value="1"/>
</dbReference>
<dbReference type="Pfam" id="PF00581">
    <property type="entry name" value="Rhodanese"/>
    <property type="match status" value="1"/>
</dbReference>
<dbReference type="Pfam" id="PF00899">
    <property type="entry name" value="ThiF"/>
    <property type="match status" value="1"/>
</dbReference>
<dbReference type="SMART" id="SM00450">
    <property type="entry name" value="RHOD"/>
    <property type="match status" value="1"/>
</dbReference>
<dbReference type="SUPFAM" id="SSF69572">
    <property type="entry name" value="Activating enzymes of the ubiquitin-like proteins"/>
    <property type="match status" value="1"/>
</dbReference>
<dbReference type="PROSITE" id="PS50206">
    <property type="entry name" value="RHODANESE_3"/>
    <property type="match status" value="1"/>
</dbReference>
<geneLocation type="chloroplast"/>
<protein>
    <recommendedName>
        <fullName>Probable molybdopterin-synthase adenylyltransferase</fullName>
        <ecNumber>2.7.7.80</ecNumber>
    </recommendedName>
    <alternativeName>
        <fullName>MoaD protein adenylase</fullName>
    </alternativeName>
    <alternativeName>
        <fullName>Molybdopterin-converting factor subunit 1 adenylase</fullName>
    </alternativeName>
    <alternativeName>
        <fullName>Sulfur carrier protein MoaD adenylyltransferase</fullName>
    </alternativeName>
</protein>
<organism>
    <name type="scientific">Porphyra purpurea</name>
    <name type="common">Red seaweed</name>
    <name type="synonym">Ulva purpurea</name>
    <dbReference type="NCBI Taxonomy" id="2787"/>
    <lineage>
        <taxon>Eukaryota</taxon>
        <taxon>Rhodophyta</taxon>
        <taxon>Bangiophyceae</taxon>
        <taxon>Bangiales</taxon>
        <taxon>Bangiaceae</taxon>
        <taxon>Porphyra</taxon>
    </lineage>
</organism>
<sequence length="382" mass="43374">MLNFRAKCTTYSLEEYTRYSKHLILPQIKLEGQERLKQSSILCVGAGGLGSPALIYLAASGIGKIGIVDNDIIDISNLQRQILYTVNDIGLSKAYIAKKKILEINPTCNVQIFNTRLQSINAIEIIRQYDIIIDGTDNFGSRYIISDSCLELNKIHIYGAIFQFEGQVSTFNYQGGPKYRDFHNNIETENNPEDTCSNAGVLGLLPGIIGTLQATEAIKIILGYKSVLSGIILKYNAMTISFEKFKIIHTQFILSQPKKKIKSLLVGNSSYPVQEIDVIELQNELYRNSFKYIILDVRSKEEYEESHLDKAVNLPIKDMKKRYYSDLNLQDKISFIYCSVDSRSIFAYNFLRKQEFKVIRVKGGLSSWTNIIGNEKLYVKSC</sequence>
<evidence type="ECO:0000250" key="1"/>
<evidence type="ECO:0000255" key="2">
    <source>
        <dbReference type="PROSITE-ProRule" id="PRU00173"/>
    </source>
</evidence>
<evidence type="ECO:0000305" key="3"/>
<gene>
    <name type="primary">moeB</name>
</gene>